<dbReference type="EC" id="2.5.1.141" evidence="2"/>
<dbReference type="EMBL" id="DS231666">
    <property type="protein sequence ID" value="ESU13818.1"/>
    <property type="molecule type" value="Genomic_DNA"/>
</dbReference>
<dbReference type="EMBL" id="HG970335">
    <property type="protein sequence ID" value="CEF85484.1"/>
    <property type="molecule type" value="Genomic_DNA"/>
</dbReference>
<dbReference type="RefSeq" id="XP_011327325.1">
    <property type="nucleotide sequence ID" value="XM_011329023.1"/>
</dbReference>
<dbReference type="SMR" id="Q4I5G1"/>
<dbReference type="FunCoup" id="Q4I5G1">
    <property type="interactions" value="824"/>
</dbReference>
<dbReference type="STRING" id="229533.Q4I5G1"/>
<dbReference type="GeneID" id="23554619"/>
<dbReference type="KEGG" id="fgr:FGSG_07547"/>
<dbReference type="VEuPathDB" id="FungiDB:FGRAMPH1_01G25069"/>
<dbReference type="eggNOG" id="KOG1380">
    <property type="taxonomic scope" value="Eukaryota"/>
</dbReference>
<dbReference type="HOGENOM" id="CLU_029631_2_0_1"/>
<dbReference type="InParanoid" id="Q4I5G1"/>
<dbReference type="OrthoDB" id="129575at110618"/>
<dbReference type="Proteomes" id="UP000070720">
    <property type="component" value="Chromosome 4"/>
</dbReference>
<dbReference type="GO" id="GO:0031966">
    <property type="term" value="C:mitochondrial membrane"/>
    <property type="evidence" value="ECO:0007669"/>
    <property type="project" value="UniProtKB-SubCell"/>
</dbReference>
<dbReference type="GO" id="GO:0008495">
    <property type="term" value="F:protoheme IX farnesyltransferase activity"/>
    <property type="evidence" value="ECO:0007669"/>
    <property type="project" value="UniProtKB-EC"/>
</dbReference>
<dbReference type="GO" id="GO:0006784">
    <property type="term" value="P:heme A biosynthetic process"/>
    <property type="evidence" value="ECO:0007669"/>
    <property type="project" value="TreeGrafter"/>
</dbReference>
<dbReference type="CDD" id="cd13957">
    <property type="entry name" value="PT_UbiA_Cox10"/>
    <property type="match status" value="1"/>
</dbReference>
<dbReference type="FunFam" id="1.10.357.140:FF:000004">
    <property type="entry name" value="Protoheme IX farnesyltransferase, mitochondrial"/>
    <property type="match status" value="1"/>
</dbReference>
<dbReference type="Gene3D" id="1.10.357.140">
    <property type="entry name" value="UbiA prenyltransferase"/>
    <property type="match status" value="1"/>
</dbReference>
<dbReference type="HAMAP" id="MF_00154">
    <property type="entry name" value="CyoE_CtaB"/>
    <property type="match status" value="1"/>
</dbReference>
<dbReference type="InterPro" id="IPR006369">
    <property type="entry name" value="Protohaem_IX_farnesylTrfase"/>
</dbReference>
<dbReference type="InterPro" id="IPR016315">
    <property type="entry name" value="Protohaem_IX_farnesylTrfase_mt"/>
</dbReference>
<dbReference type="InterPro" id="IPR000537">
    <property type="entry name" value="UbiA_prenyltransferase"/>
</dbReference>
<dbReference type="InterPro" id="IPR030470">
    <property type="entry name" value="UbiA_prenylTrfase_CS"/>
</dbReference>
<dbReference type="InterPro" id="IPR044878">
    <property type="entry name" value="UbiA_sf"/>
</dbReference>
<dbReference type="NCBIfam" id="TIGR01473">
    <property type="entry name" value="cyoE_ctaB"/>
    <property type="match status" value="1"/>
</dbReference>
<dbReference type="PANTHER" id="PTHR43448">
    <property type="entry name" value="PROTOHEME IX FARNESYLTRANSFERASE, MITOCHONDRIAL"/>
    <property type="match status" value="1"/>
</dbReference>
<dbReference type="PANTHER" id="PTHR43448:SF2">
    <property type="entry name" value="PROTOHEME IX FARNESYLTRANSFERASE, MITOCHONDRIAL"/>
    <property type="match status" value="1"/>
</dbReference>
<dbReference type="Pfam" id="PF01040">
    <property type="entry name" value="UbiA"/>
    <property type="match status" value="1"/>
</dbReference>
<dbReference type="PIRSF" id="PIRSF001773">
    <property type="entry name" value="COX10"/>
    <property type="match status" value="1"/>
</dbReference>
<dbReference type="PROSITE" id="PS00943">
    <property type="entry name" value="UBIA"/>
    <property type="match status" value="1"/>
</dbReference>
<keyword id="KW-0350">Heme biosynthesis</keyword>
<keyword id="KW-0472">Membrane</keyword>
<keyword id="KW-0496">Mitochondrion</keyword>
<keyword id="KW-1185">Reference proteome</keyword>
<keyword id="KW-0808">Transferase</keyword>
<keyword id="KW-0809">Transit peptide</keyword>
<keyword id="KW-0812">Transmembrane</keyword>
<keyword id="KW-1133">Transmembrane helix</keyword>
<feature type="transit peptide" description="Mitochondrion" evidence="3">
    <location>
        <begin position="1"/>
        <end status="unknown"/>
    </location>
</feature>
<feature type="chain" id="PRO_0000045416" description="Protoheme IX farnesyltransferase, mitochondrial">
    <location>
        <begin status="unknown"/>
        <end position="507"/>
    </location>
</feature>
<feature type="transmembrane region" description="Helical" evidence="3">
    <location>
        <begin position="166"/>
        <end position="186"/>
    </location>
</feature>
<feature type="transmembrane region" description="Helical" evidence="3">
    <location>
        <begin position="199"/>
        <end position="219"/>
    </location>
</feature>
<feature type="transmembrane region" description="Helical" evidence="3">
    <location>
        <begin position="248"/>
        <end position="268"/>
    </location>
</feature>
<feature type="transmembrane region" description="Helical" evidence="3">
    <location>
        <begin position="270"/>
        <end position="290"/>
    </location>
</feature>
<feature type="transmembrane region" description="Helical" evidence="3">
    <location>
        <begin position="298"/>
        <end position="318"/>
    </location>
</feature>
<feature type="transmembrane region" description="Helical" evidence="3">
    <location>
        <begin position="339"/>
        <end position="359"/>
    </location>
</feature>
<feature type="transmembrane region" description="Helical" evidence="3">
    <location>
        <begin position="392"/>
        <end position="412"/>
    </location>
</feature>
<feature type="transmembrane region" description="Helical" evidence="3">
    <location>
        <begin position="441"/>
        <end position="461"/>
    </location>
</feature>
<feature type="region of interest" description="Disordered" evidence="4">
    <location>
        <begin position="72"/>
        <end position="136"/>
    </location>
</feature>
<feature type="compositionally biased region" description="Low complexity" evidence="4">
    <location>
        <begin position="72"/>
        <end position="90"/>
    </location>
</feature>
<feature type="compositionally biased region" description="Basic residues" evidence="4">
    <location>
        <begin position="99"/>
        <end position="111"/>
    </location>
</feature>
<organism>
    <name type="scientific">Gibberella zeae (strain ATCC MYA-4620 / CBS 123657 / FGSC 9075 / NRRL 31084 / PH-1)</name>
    <name type="common">Wheat head blight fungus</name>
    <name type="synonym">Fusarium graminearum</name>
    <dbReference type="NCBI Taxonomy" id="229533"/>
    <lineage>
        <taxon>Eukaryota</taxon>
        <taxon>Fungi</taxon>
        <taxon>Dikarya</taxon>
        <taxon>Ascomycota</taxon>
        <taxon>Pezizomycotina</taxon>
        <taxon>Sordariomycetes</taxon>
        <taxon>Hypocreomycetidae</taxon>
        <taxon>Hypocreales</taxon>
        <taxon>Nectriaceae</taxon>
        <taxon>Fusarium</taxon>
    </lineage>
</organism>
<reference key="1">
    <citation type="journal article" date="2007" name="Science">
        <title>The Fusarium graminearum genome reveals a link between localized polymorphism and pathogen specialization.</title>
        <authorList>
            <person name="Cuomo C.A."/>
            <person name="Gueldener U."/>
            <person name="Xu J.-R."/>
            <person name="Trail F."/>
            <person name="Turgeon B.G."/>
            <person name="Di Pietro A."/>
            <person name="Walton J.D."/>
            <person name="Ma L.-J."/>
            <person name="Baker S.E."/>
            <person name="Rep M."/>
            <person name="Adam G."/>
            <person name="Antoniw J."/>
            <person name="Baldwin T."/>
            <person name="Calvo S.E."/>
            <person name="Chang Y.-L."/>
            <person name="DeCaprio D."/>
            <person name="Gale L.R."/>
            <person name="Gnerre S."/>
            <person name="Goswami R.S."/>
            <person name="Hammond-Kosack K."/>
            <person name="Harris L.J."/>
            <person name="Hilburn K."/>
            <person name="Kennell J.C."/>
            <person name="Kroken S."/>
            <person name="Magnuson J.K."/>
            <person name="Mannhaupt G."/>
            <person name="Mauceli E.W."/>
            <person name="Mewes H.-W."/>
            <person name="Mitterbauer R."/>
            <person name="Muehlbauer G."/>
            <person name="Muensterkoetter M."/>
            <person name="Nelson D."/>
            <person name="O'Donnell K."/>
            <person name="Ouellet T."/>
            <person name="Qi W."/>
            <person name="Quesneville H."/>
            <person name="Roncero M.I.G."/>
            <person name="Seong K.-Y."/>
            <person name="Tetko I.V."/>
            <person name="Urban M."/>
            <person name="Waalwijk C."/>
            <person name="Ward T.J."/>
            <person name="Yao J."/>
            <person name="Birren B.W."/>
            <person name="Kistler H.C."/>
        </authorList>
    </citation>
    <scope>NUCLEOTIDE SEQUENCE [LARGE SCALE GENOMIC DNA]</scope>
    <source>
        <strain>ATCC MYA-4620 / CBS 123657 / FGSC 9075 / NRRL 31084 / PH-1</strain>
    </source>
</reference>
<reference key="2">
    <citation type="journal article" date="2010" name="Nature">
        <title>Comparative genomics reveals mobile pathogenicity chromosomes in Fusarium.</title>
        <authorList>
            <person name="Ma L.-J."/>
            <person name="van der Does H.C."/>
            <person name="Borkovich K.A."/>
            <person name="Coleman J.J."/>
            <person name="Daboussi M.-J."/>
            <person name="Di Pietro A."/>
            <person name="Dufresne M."/>
            <person name="Freitag M."/>
            <person name="Grabherr M."/>
            <person name="Henrissat B."/>
            <person name="Houterman P.M."/>
            <person name="Kang S."/>
            <person name="Shim W.-B."/>
            <person name="Woloshuk C."/>
            <person name="Xie X."/>
            <person name="Xu J.-R."/>
            <person name="Antoniw J."/>
            <person name="Baker S.E."/>
            <person name="Bluhm B.H."/>
            <person name="Breakspear A."/>
            <person name="Brown D.W."/>
            <person name="Butchko R.A.E."/>
            <person name="Chapman S."/>
            <person name="Coulson R."/>
            <person name="Coutinho P.M."/>
            <person name="Danchin E.G.J."/>
            <person name="Diener A."/>
            <person name="Gale L.R."/>
            <person name="Gardiner D.M."/>
            <person name="Goff S."/>
            <person name="Hammond-Kosack K.E."/>
            <person name="Hilburn K."/>
            <person name="Hua-Van A."/>
            <person name="Jonkers W."/>
            <person name="Kazan K."/>
            <person name="Kodira C.D."/>
            <person name="Koehrsen M."/>
            <person name="Kumar L."/>
            <person name="Lee Y.-H."/>
            <person name="Li L."/>
            <person name="Manners J.M."/>
            <person name="Miranda-Saavedra D."/>
            <person name="Mukherjee M."/>
            <person name="Park G."/>
            <person name="Park J."/>
            <person name="Park S.-Y."/>
            <person name="Proctor R.H."/>
            <person name="Regev A."/>
            <person name="Ruiz-Roldan M.C."/>
            <person name="Sain D."/>
            <person name="Sakthikumar S."/>
            <person name="Sykes S."/>
            <person name="Schwartz D.C."/>
            <person name="Turgeon B.G."/>
            <person name="Wapinski I."/>
            <person name="Yoder O."/>
            <person name="Young S."/>
            <person name="Zeng Q."/>
            <person name="Zhou S."/>
            <person name="Galagan J."/>
            <person name="Cuomo C.A."/>
            <person name="Kistler H.C."/>
            <person name="Rep M."/>
        </authorList>
    </citation>
    <scope>GENOME REANNOTATION</scope>
    <source>
        <strain>ATCC MYA-4620 / CBS 123657 / FGSC 9075 / NRRL 31084 / PH-1</strain>
    </source>
</reference>
<reference key="3">
    <citation type="journal article" date="2015" name="BMC Genomics">
        <title>The completed genome sequence of the pathogenic ascomycete fungus Fusarium graminearum.</title>
        <authorList>
            <person name="King R."/>
            <person name="Urban M."/>
            <person name="Hammond-Kosack M.C.U."/>
            <person name="Hassani-Pak K."/>
            <person name="Hammond-Kosack K.E."/>
        </authorList>
    </citation>
    <scope>NUCLEOTIDE SEQUENCE [LARGE SCALE GENOMIC DNA]</scope>
    <source>
        <strain>ATCC MYA-4620 / CBS 123657 / FGSC 9075 / NRRL 31084 / PH-1</strain>
    </source>
</reference>
<protein>
    <recommendedName>
        <fullName>Protoheme IX farnesyltransferase, mitochondrial</fullName>
        <ecNumber evidence="2">2.5.1.141</ecNumber>
    </recommendedName>
    <alternativeName>
        <fullName>Heme O synthase</fullName>
    </alternativeName>
</protein>
<sequence>MRPPRCLFPAAEILLKAPPSRRCMSSAAAFQPPKIVAAIPWKGSSFFLSNRLFDRSTCLDFVVLRRANGIRSTSASASTTHDSTLSSSPTANHSTSAHKDHKIAPHRKRQAQRREKAAAEAAAAAARGEKPLPPDASSLLAAHAASQTSPLRRHLSACLSLAKPRLTMLVVLTAMATYALYPVPEMLSPSTTETPSLSPLTLLFLTIGTTFCSASANALNMLYEPSTDAKMTRTRNRPLVRNLISKRAAVLFAILSGFVGTGALYFGVNPTVSGLGFANIVIYAGMYTPLKAVTAFNTWIGAVVGGIPPLMGWAAAAGETATKDGSWRELLFASDGSSIGGWVMAGLLFAWQFPHFMALSWPIREEYKKAGLRMLAWTNPARNGRVALRYSFVFIPLCLSLCAAGVTEWSFAVTSFPINAWLIRESVRFWRYEGNKGSARGLFWASVWHLPGVMILALLHKKGMWTRVWRSVFGEDEGEWEEEELDEMMSVAVANTNSHMQNQKTVR</sequence>
<evidence type="ECO:0000250" key="1"/>
<evidence type="ECO:0000250" key="2">
    <source>
        <dbReference type="UniProtKB" id="P24009"/>
    </source>
</evidence>
<evidence type="ECO:0000255" key="3"/>
<evidence type="ECO:0000256" key="4">
    <source>
        <dbReference type="SAM" id="MobiDB-lite"/>
    </source>
</evidence>
<evidence type="ECO:0000305" key="5"/>
<comment type="function">
    <text evidence="1">Converts protoheme IX and farnesyl diphosphate to heme O.</text>
</comment>
<comment type="catalytic activity">
    <reaction evidence="2">
        <text>heme b + (2E,6E)-farnesyl diphosphate + H2O = Fe(II)-heme o + diphosphate</text>
        <dbReference type="Rhea" id="RHEA:28070"/>
        <dbReference type="ChEBI" id="CHEBI:15377"/>
        <dbReference type="ChEBI" id="CHEBI:33019"/>
        <dbReference type="ChEBI" id="CHEBI:60344"/>
        <dbReference type="ChEBI" id="CHEBI:60530"/>
        <dbReference type="ChEBI" id="CHEBI:175763"/>
        <dbReference type="EC" id="2.5.1.141"/>
    </reaction>
</comment>
<comment type="subcellular location">
    <subcellularLocation>
        <location evidence="1">Mitochondrion membrane</location>
        <topology evidence="1">Multi-pass membrane protein</topology>
    </subcellularLocation>
</comment>
<comment type="similarity">
    <text evidence="5">Belongs to the UbiA prenyltransferase family.</text>
</comment>
<gene>
    <name type="primary">COX10</name>
    <name type="ORF">FGRRES_07547</name>
    <name type="ORF">FGSG_07547</name>
</gene>
<proteinExistence type="inferred from homology"/>
<name>COX10_GIBZE</name>
<accession>Q4I5G1</accession>
<accession>A0A0E0SGC1</accession>
<accession>V6RGV1</accession>